<protein>
    <recommendedName>
        <fullName>Sphingosine 1-phosphate receptor 4</fullName>
        <shortName>S1P receptor 4</shortName>
        <shortName>S1P4</shortName>
    </recommendedName>
    <alternativeName>
        <fullName>Endothelial differentiation G-protein coupled receptor 6</fullName>
    </alternativeName>
    <alternativeName>
        <fullName>Sphingosine 1-phosphate receptor Edg-6</fullName>
        <shortName>S1P receptor Edg-6</shortName>
    </alternativeName>
</protein>
<dbReference type="EMBL" id="AJ000479">
    <property type="protein sequence ID" value="CAA04118.1"/>
    <property type="molecule type" value="mRNA"/>
</dbReference>
<dbReference type="EMBL" id="AY322537">
    <property type="protein sequence ID" value="AAP84350.1"/>
    <property type="molecule type" value="Genomic_DNA"/>
</dbReference>
<dbReference type="EMBL" id="CH471139">
    <property type="protein sequence ID" value="EAW69336.1"/>
    <property type="molecule type" value="Genomic_DNA"/>
</dbReference>
<dbReference type="EMBL" id="CH471139">
    <property type="protein sequence ID" value="EAW69337.1"/>
    <property type="molecule type" value="Genomic_DNA"/>
</dbReference>
<dbReference type="EMBL" id="BC014970">
    <property type="protein sequence ID" value="AAH14970.1"/>
    <property type="molecule type" value="mRNA"/>
</dbReference>
<dbReference type="CCDS" id="CCDS12105.1"/>
<dbReference type="RefSeq" id="NP_003766.1">
    <property type="nucleotide sequence ID" value="NM_003775.4"/>
</dbReference>
<dbReference type="PDB" id="2DCO">
    <property type="method" value="NMR"/>
    <property type="chains" value="A=105-118"/>
</dbReference>
<dbReference type="PDBsum" id="2DCO"/>
<dbReference type="SMR" id="O95977"/>
<dbReference type="BioGRID" id="114243">
    <property type="interactions" value="157"/>
</dbReference>
<dbReference type="CORUM" id="O95977"/>
<dbReference type="FunCoup" id="O95977">
    <property type="interactions" value="991"/>
</dbReference>
<dbReference type="IntAct" id="O95977">
    <property type="interactions" value="132"/>
</dbReference>
<dbReference type="STRING" id="9606.ENSP00000246115"/>
<dbReference type="BindingDB" id="O95977"/>
<dbReference type="ChEMBL" id="CHEMBL3230"/>
<dbReference type="DrugBank" id="DB14766">
    <property type="generic name" value="Etrasimod"/>
</dbReference>
<dbReference type="DrugBank" id="DB08868">
    <property type="generic name" value="Fingolimod"/>
</dbReference>
<dbReference type="DrugCentral" id="O95977"/>
<dbReference type="GuidetoPHARMACOLOGY" id="278"/>
<dbReference type="GlyCosmos" id="O95977">
    <property type="glycosylation" value="2 sites, No reported glycans"/>
</dbReference>
<dbReference type="GlyGen" id="O95977">
    <property type="glycosylation" value="2 sites"/>
</dbReference>
<dbReference type="iPTMnet" id="O95977"/>
<dbReference type="PhosphoSitePlus" id="O95977"/>
<dbReference type="SwissPalm" id="O95977"/>
<dbReference type="BioMuta" id="S1PR4"/>
<dbReference type="MassIVE" id="O95977"/>
<dbReference type="PaxDb" id="9606-ENSP00000246115"/>
<dbReference type="PeptideAtlas" id="O95977"/>
<dbReference type="ProteomicsDB" id="51157"/>
<dbReference type="Antibodypedia" id="10967">
    <property type="antibodies" value="387 antibodies from 39 providers"/>
</dbReference>
<dbReference type="DNASU" id="8698"/>
<dbReference type="Ensembl" id="ENST00000246115.5">
    <property type="protein sequence ID" value="ENSP00000246115.3"/>
    <property type="gene ID" value="ENSG00000125910.6"/>
</dbReference>
<dbReference type="GeneID" id="8698"/>
<dbReference type="KEGG" id="hsa:8698"/>
<dbReference type="MANE-Select" id="ENST00000246115.5">
    <property type="protein sequence ID" value="ENSP00000246115.3"/>
    <property type="RefSeq nucleotide sequence ID" value="NM_003775.4"/>
    <property type="RefSeq protein sequence ID" value="NP_003766.1"/>
</dbReference>
<dbReference type="UCSC" id="uc002lxg.4">
    <property type="organism name" value="human"/>
</dbReference>
<dbReference type="AGR" id="HGNC:3170"/>
<dbReference type="CTD" id="8698"/>
<dbReference type="DisGeNET" id="8698"/>
<dbReference type="GeneCards" id="S1PR4"/>
<dbReference type="HGNC" id="HGNC:3170">
    <property type="gene designation" value="S1PR4"/>
</dbReference>
<dbReference type="HPA" id="ENSG00000125910">
    <property type="expression patterns" value="Tissue enhanced (bone marrow, lymphoid tissue)"/>
</dbReference>
<dbReference type="MIM" id="603751">
    <property type="type" value="gene"/>
</dbReference>
<dbReference type="neXtProt" id="NX_O95977"/>
<dbReference type="OpenTargets" id="ENSG00000125910"/>
<dbReference type="PharmGKB" id="PA162402371"/>
<dbReference type="VEuPathDB" id="HostDB:ENSG00000125910"/>
<dbReference type="eggNOG" id="ENOG502QQUE">
    <property type="taxonomic scope" value="Eukaryota"/>
</dbReference>
<dbReference type="GeneTree" id="ENSGT01050000244887"/>
<dbReference type="HOGENOM" id="CLU_047979_1_1_1"/>
<dbReference type="InParanoid" id="O95977"/>
<dbReference type="OMA" id="PAHWFLR"/>
<dbReference type="OrthoDB" id="9930460at2759"/>
<dbReference type="PAN-GO" id="O95977">
    <property type="GO annotations" value="5 GO annotations based on evolutionary models"/>
</dbReference>
<dbReference type="PhylomeDB" id="O95977"/>
<dbReference type="TreeFam" id="TF330052"/>
<dbReference type="PathwayCommons" id="O95977"/>
<dbReference type="Reactome" id="R-HSA-418594">
    <property type="pathway name" value="G alpha (i) signalling events"/>
</dbReference>
<dbReference type="Reactome" id="R-HSA-419408">
    <property type="pathway name" value="Lysosphingolipid and LPA receptors"/>
</dbReference>
<dbReference type="SignaLink" id="O95977"/>
<dbReference type="SIGNOR" id="O95977"/>
<dbReference type="BioGRID-ORCS" id="8698">
    <property type="hits" value="15 hits in 1144 CRISPR screens"/>
</dbReference>
<dbReference type="EvolutionaryTrace" id="O95977"/>
<dbReference type="GeneWiki" id="S1PR4"/>
<dbReference type="GenomeRNAi" id="8698"/>
<dbReference type="Pharos" id="O95977">
    <property type="development level" value="Tclin"/>
</dbReference>
<dbReference type="PRO" id="PR:O95977"/>
<dbReference type="Proteomes" id="UP000005640">
    <property type="component" value="Chromosome 19"/>
</dbReference>
<dbReference type="RNAct" id="O95977">
    <property type="molecule type" value="protein"/>
</dbReference>
<dbReference type="Bgee" id="ENSG00000125910">
    <property type="expression patterns" value="Expressed in granulocyte and 125 other cell types or tissues"/>
</dbReference>
<dbReference type="GO" id="GO:0005737">
    <property type="term" value="C:cytoplasm"/>
    <property type="evidence" value="ECO:0000318"/>
    <property type="project" value="GO_Central"/>
</dbReference>
<dbReference type="GO" id="GO:0005739">
    <property type="term" value="C:mitochondrion"/>
    <property type="evidence" value="ECO:0000314"/>
    <property type="project" value="HPA"/>
</dbReference>
<dbReference type="GO" id="GO:0005886">
    <property type="term" value="C:plasma membrane"/>
    <property type="evidence" value="ECO:0000318"/>
    <property type="project" value="GO_Central"/>
</dbReference>
<dbReference type="GO" id="GO:0098793">
    <property type="term" value="C:presynapse"/>
    <property type="evidence" value="ECO:0007669"/>
    <property type="project" value="Ensembl"/>
</dbReference>
<dbReference type="GO" id="GO:0004930">
    <property type="term" value="F:G protein-coupled receptor activity"/>
    <property type="evidence" value="ECO:0000318"/>
    <property type="project" value="GO_Central"/>
</dbReference>
<dbReference type="GO" id="GO:0008289">
    <property type="term" value="F:lipid binding"/>
    <property type="evidence" value="ECO:0000304"/>
    <property type="project" value="ProtInc"/>
</dbReference>
<dbReference type="GO" id="GO:0038036">
    <property type="term" value="F:sphingosine-1-phosphate receptor activity"/>
    <property type="evidence" value="ECO:0007669"/>
    <property type="project" value="InterPro"/>
</dbReference>
<dbReference type="GO" id="GO:0007189">
    <property type="term" value="P:adenylate cyclase-activating G protein-coupled receptor signaling pathway"/>
    <property type="evidence" value="ECO:0000318"/>
    <property type="project" value="GO_Central"/>
</dbReference>
<dbReference type="GO" id="GO:0007186">
    <property type="term" value="P:G protein-coupled receptor signaling pathway"/>
    <property type="evidence" value="ECO:0000314"/>
    <property type="project" value="UniProtKB"/>
</dbReference>
<dbReference type="GO" id="GO:0019222">
    <property type="term" value="P:regulation of metabolic process"/>
    <property type="evidence" value="ECO:0000318"/>
    <property type="project" value="GO_Central"/>
</dbReference>
<dbReference type="FunFam" id="1.20.1070.10:FF:000305">
    <property type="entry name" value="Sphingosine 1-phosphate receptor 4"/>
    <property type="match status" value="1"/>
</dbReference>
<dbReference type="Gene3D" id="1.20.1070.10">
    <property type="entry name" value="Rhodopsin 7-helix transmembrane proteins"/>
    <property type="match status" value="1"/>
</dbReference>
<dbReference type="InterPro" id="IPR004064">
    <property type="entry name" value="EDG6_rcpt"/>
</dbReference>
<dbReference type="InterPro" id="IPR000276">
    <property type="entry name" value="GPCR_Rhodpsn"/>
</dbReference>
<dbReference type="InterPro" id="IPR017452">
    <property type="entry name" value="GPCR_Rhodpsn_7TM"/>
</dbReference>
<dbReference type="InterPro" id="IPR004061">
    <property type="entry name" value="S1P_rcpt"/>
</dbReference>
<dbReference type="PANTHER" id="PTHR22750">
    <property type="entry name" value="G-PROTEIN COUPLED RECEPTOR"/>
    <property type="match status" value="1"/>
</dbReference>
<dbReference type="Pfam" id="PF00001">
    <property type="entry name" value="7tm_1"/>
    <property type="match status" value="1"/>
</dbReference>
<dbReference type="PRINTS" id="PR01526">
    <property type="entry name" value="EDG6RECEPTOR"/>
</dbReference>
<dbReference type="PRINTS" id="PR00237">
    <property type="entry name" value="GPCRRHODOPSN"/>
</dbReference>
<dbReference type="PRINTS" id="PR01523">
    <property type="entry name" value="S1PRECEPTOR"/>
</dbReference>
<dbReference type="SUPFAM" id="SSF81321">
    <property type="entry name" value="Family A G protein-coupled receptor-like"/>
    <property type="match status" value="1"/>
</dbReference>
<dbReference type="PROSITE" id="PS50262">
    <property type="entry name" value="G_PROTEIN_RECEP_F1_2"/>
    <property type="match status" value="1"/>
</dbReference>
<comment type="function">
    <text evidence="4 5">Receptor for the lysosphingolipid sphingosine 1-phosphate (S1P). S1P is a bioactive lysophospholipid that elicits diverse physiological effect on most types of cells and tissues. May be involved in cell migration processes that are specific for lymphocytes.</text>
</comment>
<comment type="interaction">
    <interactant intactId="EBI-12194739">
        <id>O95977</id>
    </interactant>
    <interactant intactId="EBI-356700">
        <id>P57678</id>
        <label>GEMIN4</label>
    </interactant>
    <organismsDiffer>false</organismsDiffer>
    <experiments>3</experiments>
</comment>
<comment type="subcellular location">
    <subcellularLocation>
        <location>Cell membrane</location>
        <topology>Multi-pass membrane protein</topology>
    </subcellularLocation>
</comment>
<comment type="tissue specificity">
    <text>Specifically expressed in fetal and adult lymphoid and hematopoietic tissue as well as in lung. Considerable level of expression in adult and fetal spleen as well as adult peripheral leukocytes and lung. Lower expression in adult thymus, lymph node, bone marrow, and appendix as well as in fetal liver, thymus, and lung.</text>
</comment>
<comment type="similarity">
    <text evidence="3">Belongs to the G-protein coupled receptor 1 family.</text>
</comment>
<reference key="1">
    <citation type="journal article" date="1998" name="Genomics">
        <title>EDG6, a novel G protein-coupled receptor related to receptors for bioactive lysophospholipids, is specifically expressed in lymphoid tissue.</title>
        <authorList>
            <person name="Graeler M.H."/>
            <person name="Bernhardt G."/>
            <person name="Lipp M."/>
        </authorList>
    </citation>
    <scope>NUCLEOTIDE SEQUENCE [MRNA]</scope>
    <source>
        <tissue>Dendritic cell</tissue>
    </source>
</reference>
<reference key="2">
    <citation type="submission" date="2003-06" db="EMBL/GenBank/DDBJ databases">
        <title>cDNA clones of human proteins involved in signal transduction sequenced by the Guthrie cDNA resource center (www.cdna.org).</title>
        <authorList>
            <person name="Kopatz S.A."/>
            <person name="Aronstam R.S."/>
            <person name="Sharma S.V."/>
        </authorList>
    </citation>
    <scope>NUCLEOTIDE SEQUENCE [LARGE SCALE MRNA]</scope>
</reference>
<reference key="3">
    <citation type="submission" date="2005-09" db="EMBL/GenBank/DDBJ databases">
        <authorList>
            <person name="Mural R.J."/>
            <person name="Istrail S."/>
            <person name="Sutton G.G."/>
            <person name="Florea L."/>
            <person name="Halpern A.L."/>
            <person name="Mobarry C.M."/>
            <person name="Lippert R."/>
            <person name="Walenz B."/>
            <person name="Shatkay H."/>
            <person name="Dew I."/>
            <person name="Miller J.R."/>
            <person name="Flanigan M.J."/>
            <person name="Edwards N.J."/>
            <person name="Bolanos R."/>
            <person name="Fasulo D."/>
            <person name="Halldorsson B.V."/>
            <person name="Hannenhalli S."/>
            <person name="Turner R."/>
            <person name="Yooseph S."/>
            <person name="Lu F."/>
            <person name="Nusskern D.R."/>
            <person name="Shue B.C."/>
            <person name="Zheng X.H."/>
            <person name="Zhong F."/>
            <person name="Delcher A.L."/>
            <person name="Huson D.H."/>
            <person name="Kravitz S.A."/>
            <person name="Mouchard L."/>
            <person name="Reinert K."/>
            <person name="Remington K.A."/>
            <person name="Clark A.G."/>
            <person name="Waterman M.S."/>
            <person name="Eichler E.E."/>
            <person name="Adams M.D."/>
            <person name="Hunkapiller M.W."/>
            <person name="Myers E.W."/>
            <person name="Venter J.C."/>
        </authorList>
    </citation>
    <scope>NUCLEOTIDE SEQUENCE [LARGE SCALE GENOMIC DNA]</scope>
</reference>
<reference key="4">
    <citation type="journal article" date="2004" name="Genome Res.">
        <title>The status, quality, and expansion of the NIH full-length cDNA project: the Mammalian Gene Collection (MGC).</title>
        <authorList>
            <consortium name="The MGC Project Team"/>
        </authorList>
    </citation>
    <scope>NUCLEOTIDE SEQUENCE [LARGE SCALE MRNA]</scope>
    <source>
        <tissue>Blood</tissue>
    </source>
</reference>
<reference key="5">
    <citation type="journal article" date="2000" name="Biochem. Biophys. Res. Commun.">
        <title>Edg-6 as a putative sphingosine 1-phosphate receptor coupling to Ca(2+) signaling pathway.</title>
        <authorList>
            <person name="Yamazaki Y."/>
            <person name="Kon J."/>
            <person name="Sato K."/>
            <person name="Tomura H."/>
            <person name="Sato M."/>
            <person name="Yoneya T."/>
            <person name="Okazaki H."/>
            <person name="Okajima F."/>
            <person name="Ohta H."/>
        </authorList>
    </citation>
    <scope>FUNCTION</scope>
</reference>
<reference key="6">
    <citation type="journal article" date="2000" name="Blood">
        <title>Sphingosine-1-phosphate is a ligand for the G protein-coupled receptor EDG-6.</title>
        <authorList>
            <person name="Van Brocklyn J.R."/>
            <person name="Graeler M.H."/>
            <person name="Bernhardt G."/>
            <person name="Hobson J.P."/>
            <person name="Lipp M."/>
            <person name="Spiegel S."/>
        </authorList>
    </citation>
    <scope>FUNCTION</scope>
</reference>
<reference key="7">
    <citation type="journal article" date="2007" name="Biopolymers">
        <title>Peptide design and structural characterization of a GPCR loop mimetic.</title>
        <authorList>
            <person name="Pham T.-C.T."/>
            <person name="Kriwacki R.W."/>
            <person name="Parrill A.L."/>
        </authorList>
    </citation>
    <scope>STRUCTURE BY NMR OF 105-122</scope>
</reference>
<name>S1PR4_HUMAN</name>
<gene>
    <name type="primary">S1PR4</name>
    <name type="synonym">EDG6</name>
</gene>
<organism>
    <name type="scientific">Homo sapiens</name>
    <name type="common">Human</name>
    <dbReference type="NCBI Taxonomy" id="9606"/>
    <lineage>
        <taxon>Eukaryota</taxon>
        <taxon>Metazoa</taxon>
        <taxon>Chordata</taxon>
        <taxon>Craniata</taxon>
        <taxon>Vertebrata</taxon>
        <taxon>Euteleostomi</taxon>
        <taxon>Mammalia</taxon>
        <taxon>Eutheria</taxon>
        <taxon>Euarchontoglires</taxon>
        <taxon>Primates</taxon>
        <taxon>Haplorrhini</taxon>
        <taxon>Catarrhini</taxon>
        <taxon>Hominidae</taxon>
        <taxon>Homo</taxon>
    </lineage>
</organism>
<proteinExistence type="evidence at protein level"/>
<feature type="chain" id="PRO_0000069431" description="Sphingosine 1-phosphate receptor 4">
    <location>
        <begin position="1"/>
        <end position="384"/>
    </location>
</feature>
<feature type="topological domain" description="Extracellular" evidence="1">
    <location>
        <begin position="1"/>
        <end position="50"/>
    </location>
</feature>
<feature type="transmembrane region" description="Helical; Name=1" evidence="1">
    <location>
        <begin position="51"/>
        <end position="71"/>
    </location>
</feature>
<feature type="topological domain" description="Cytoplasmic" evidence="1">
    <location>
        <begin position="72"/>
        <end position="84"/>
    </location>
</feature>
<feature type="transmembrane region" description="Helical; Name=2" evidence="1">
    <location>
        <begin position="85"/>
        <end position="105"/>
    </location>
</feature>
<feature type="topological domain" description="Extracellular" evidence="1">
    <location>
        <begin position="106"/>
        <end position="117"/>
    </location>
</feature>
<feature type="transmembrane region" description="Helical; Name=3" evidence="1">
    <location>
        <begin position="118"/>
        <end position="138"/>
    </location>
</feature>
<feature type="topological domain" description="Cytoplasmic" evidence="1">
    <location>
        <begin position="139"/>
        <end position="161"/>
    </location>
</feature>
<feature type="transmembrane region" description="Helical; Name=4" evidence="1">
    <location>
        <begin position="162"/>
        <end position="182"/>
    </location>
</feature>
<feature type="topological domain" description="Extracellular" evidence="1">
    <location>
        <begin position="183"/>
        <end position="206"/>
    </location>
</feature>
<feature type="transmembrane region" description="Helical; Name=5" evidence="1">
    <location>
        <begin position="207"/>
        <end position="227"/>
    </location>
</feature>
<feature type="topological domain" description="Cytoplasmic" evidence="1">
    <location>
        <begin position="228"/>
        <end position="252"/>
    </location>
</feature>
<feature type="transmembrane region" description="Helical; Name=6" evidence="1">
    <location>
        <begin position="253"/>
        <end position="273"/>
    </location>
</feature>
<feature type="topological domain" description="Extracellular" evidence="1">
    <location>
        <begin position="274"/>
        <end position="288"/>
    </location>
</feature>
<feature type="transmembrane region" description="Helical; Name=7" evidence="1">
    <location>
        <begin position="289"/>
        <end position="309"/>
    </location>
</feature>
<feature type="topological domain" description="Cytoplasmic" evidence="1">
    <location>
        <begin position="310"/>
        <end position="384"/>
    </location>
</feature>
<feature type="lipid moiety-binding region" description="S-palmitoyl cysteine" evidence="1">
    <location>
        <position position="323"/>
    </location>
</feature>
<feature type="glycosylation site" description="N-linked (GlcNAc...) asparagine" evidence="2">
    <location>
        <position position="2"/>
    </location>
</feature>
<feature type="glycosylation site" description="N-linked (GlcNAc...) asparagine" evidence="2">
    <location>
        <position position="30"/>
    </location>
</feature>
<feature type="sequence variant" id="VAR_022066" description="In dbSNP:rs3746072.">
    <original>R</original>
    <variation>L</variation>
    <location>
        <position position="365"/>
    </location>
</feature>
<feature type="helix" evidence="6">
    <location>
        <begin position="108"/>
        <end position="111"/>
    </location>
</feature>
<feature type="strand" evidence="6">
    <location>
        <begin position="113"/>
        <end position="116"/>
    </location>
</feature>
<sequence length="384" mass="41623">MNATGTPVAPESCQQLAAGGHSRLIVLHYNHSGRLAGRGGPEDGGLGALRGLSVAASCLVVLENLLVLAAITSHMRSRRWVYYCLVNITLSDLLTGAAYLANVLLSGARTFRLAPAQWFLREGLLFTALAASTFSLLFTAGERFATMVRPVAESGATKTSRVYGFIGLCWLLAALLGMLPLLGWNCLCAFDRCSSLLPLYSKRYILFCLVIFAGVLATIMGLYGAIFRLVQASGQKAPRPAARRKARRLLKTVLMILLAFLVCWGPLFGLLLADVFGSNLWAQEYLRGMDWILALAVLNSAVNPIIYSFRSREVCRAVLSFLCCGCLRLGMRGPGDCLARAVEAHSGASTTDSSLRPRDSFRGSRSLSFRMREPLSSISSVRSI</sequence>
<evidence type="ECO:0000250" key="1"/>
<evidence type="ECO:0000255" key="2"/>
<evidence type="ECO:0000255" key="3">
    <source>
        <dbReference type="PROSITE-ProRule" id="PRU00521"/>
    </source>
</evidence>
<evidence type="ECO:0000269" key="4">
    <source>
    </source>
</evidence>
<evidence type="ECO:0000269" key="5">
    <source>
    </source>
</evidence>
<evidence type="ECO:0007829" key="6">
    <source>
        <dbReference type="PDB" id="2DCO"/>
    </source>
</evidence>
<accession>O95977</accession>
<accession>D6W612</accession>
<keyword id="KW-0002">3D-structure</keyword>
<keyword id="KW-1003">Cell membrane</keyword>
<keyword id="KW-0297">G-protein coupled receptor</keyword>
<keyword id="KW-0325">Glycoprotein</keyword>
<keyword id="KW-0449">Lipoprotein</keyword>
<keyword id="KW-0472">Membrane</keyword>
<keyword id="KW-0564">Palmitate</keyword>
<keyword id="KW-1267">Proteomics identification</keyword>
<keyword id="KW-0675">Receptor</keyword>
<keyword id="KW-1185">Reference proteome</keyword>
<keyword id="KW-0807">Transducer</keyword>
<keyword id="KW-0812">Transmembrane</keyword>
<keyword id="KW-1133">Transmembrane helix</keyword>